<proteinExistence type="evidence at protein level"/>
<gene>
    <name evidence="4" type="primary">rmlD</name>
    <name type="synonym">rfbD</name>
    <name type="ordered locus">MSMEG_1825</name>
    <name type="ordered locus">MSMEI_1782</name>
</gene>
<keyword id="KW-0119">Carbohydrate metabolism</keyword>
<keyword id="KW-0460">Magnesium</keyword>
<keyword id="KW-0479">Metal-binding</keyword>
<keyword id="KW-0520">NAD</keyword>
<keyword id="KW-0521">NADP</keyword>
<keyword id="KW-0560">Oxidoreductase</keyword>
<keyword id="KW-1185">Reference proteome</keyword>
<name>RMLD_MYCS2</name>
<protein>
    <recommendedName>
        <fullName evidence="1">dTDP-4-dehydrorhamnose reductase</fullName>
        <ecNumber evidence="1">1.1.1.133</ecNumber>
    </recommendedName>
    <alternativeName>
        <fullName evidence="1">dTDP-4-keto-L-rhamnose reductase</fullName>
    </alternativeName>
    <alternativeName>
        <fullName evidence="4">dTDP-6-deoxy-L-lyxo-4-hexulose reductase</fullName>
    </alternativeName>
    <alternativeName>
        <fullName evidence="1">dTDP-6-deoxy-L-mannose dehydrogenase</fullName>
    </alternativeName>
    <alternativeName>
        <fullName evidence="1">dTDP-L-rhamnose synthase</fullName>
    </alternativeName>
</protein>
<dbReference type="EC" id="1.1.1.133" evidence="1"/>
<dbReference type="EMBL" id="CP000480">
    <property type="protein sequence ID" value="ABK74972.1"/>
    <property type="molecule type" value="Genomic_DNA"/>
</dbReference>
<dbReference type="EMBL" id="CP001663">
    <property type="protein sequence ID" value="AFP38254.1"/>
    <property type="status" value="ALT_INIT"/>
    <property type="molecule type" value="Genomic_DNA"/>
</dbReference>
<dbReference type="RefSeq" id="YP_886196.1">
    <property type="nucleotide sequence ID" value="NC_008596.1"/>
</dbReference>
<dbReference type="SMR" id="A0QTF8"/>
<dbReference type="STRING" id="246196.MSMEG_1825"/>
<dbReference type="PaxDb" id="246196-MSMEI_1782"/>
<dbReference type="KEGG" id="msg:MSMEI_1782"/>
<dbReference type="KEGG" id="msm:MSMEG_1825"/>
<dbReference type="PATRIC" id="fig|246196.19.peg.1807"/>
<dbReference type="eggNOG" id="COG1091">
    <property type="taxonomic scope" value="Bacteria"/>
</dbReference>
<dbReference type="OrthoDB" id="9803892at2"/>
<dbReference type="UniPathway" id="UPA00124"/>
<dbReference type="Proteomes" id="UP000000757">
    <property type="component" value="Chromosome"/>
</dbReference>
<dbReference type="Proteomes" id="UP000006158">
    <property type="component" value="Chromosome"/>
</dbReference>
<dbReference type="GO" id="GO:0005829">
    <property type="term" value="C:cytosol"/>
    <property type="evidence" value="ECO:0007669"/>
    <property type="project" value="TreeGrafter"/>
</dbReference>
<dbReference type="GO" id="GO:0008831">
    <property type="term" value="F:dTDP-4-dehydrorhamnose reductase activity"/>
    <property type="evidence" value="ECO:0000316"/>
    <property type="project" value="UniProtKB"/>
</dbReference>
<dbReference type="GO" id="GO:0046872">
    <property type="term" value="F:metal ion binding"/>
    <property type="evidence" value="ECO:0007669"/>
    <property type="project" value="UniProtKB-KW"/>
</dbReference>
<dbReference type="GO" id="GO:0019305">
    <property type="term" value="P:dTDP-rhamnose biosynthetic process"/>
    <property type="evidence" value="ECO:0007669"/>
    <property type="project" value="UniProtKB-UniPathway"/>
</dbReference>
<dbReference type="GO" id="GO:0000271">
    <property type="term" value="P:polysaccharide biosynthetic process"/>
    <property type="evidence" value="ECO:0000316"/>
    <property type="project" value="UniProtKB"/>
</dbReference>
<dbReference type="CDD" id="cd05254">
    <property type="entry name" value="dTDP_HR_like_SDR_e"/>
    <property type="match status" value="1"/>
</dbReference>
<dbReference type="Gene3D" id="3.40.50.720">
    <property type="entry name" value="NAD(P)-binding Rossmann-like Domain"/>
    <property type="match status" value="1"/>
</dbReference>
<dbReference type="Gene3D" id="3.90.25.10">
    <property type="entry name" value="UDP-galactose 4-epimerase, domain 1"/>
    <property type="match status" value="1"/>
</dbReference>
<dbReference type="InterPro" id="IPR005913">
    <property type="entry name" value="dTDP_dehydrorham_reduct"/>
</dbReference>
<dbReference type="InterPro" id="IPR036291">
    <property type="entry name" value="NAD(P)-bd_dom_sf"/>
</dbReference>
<dbReference type="InterPro" id="IPR029903">
    <property type="entry name" value="RmlD-like-bd"/>
</dbReference>
<dbReference type="NCBIfam" id="TIGR01214">
    <property type="entry name" value="rmlD"/>
    <property type="match status" value="1"/>
</dbReference>
<dbReference type="PANTHER" id="PTHR10491">
    <property type="entry name" value="DTDP-4-DEHYDRORHAMNOSE REDUCTASE"/>
    <property type="match status" value="1"/>
</dbReference>
<dbReference type="PANTHER" id="PTHR10491:SF4">
    <property type="entry name" value="METHIONINE ADENOSYLTRANSFERASE 2 SUBUNIT BETA"/>
    <property type="match status" value="1"/>
</dbReference>
<dbReference type="Pfam" id="PF04321">
    <property type="entry name" value="RmlD_sub_bind"/>
    <property type="match status" value="1"/>
</dbReference>
<dbReference type="SUPFAM" id="SSF51735">
    <property type="entry name" value="NAD(P)-binding Rossmann-fold domains"/>
    <property type="match status" value="1"/>
</dbReference>
<feature type="chain" id="PRO_0000399900" description="dTDP-4-dehydrorhamnose reductase">
    <location>
        <begin position="1"/>
        <end position="327"/>
    </location>
</feature>
<feature type="region of interest" description="Disordered" evidence="2">
    <location>
        <begin position="1"/>
        <end position="22"/>
    </location>
</feature>
<feature type="region of interest" description="Disordered" evidence="2">
    <location>
        <begin position="264"/>
        <end position="292"/>
    </location>
</feature>
<feature type="compositionally biased region" description="Basic and acidic residues" evidence="2">
    <location>
        <begin position="264"/>
        <end position="276"/>
    </location>
</feature>
<feature type="active site" description="Proton donor/acceptor" evidence="1">
    <location>
        <position position="157"/>
    </location>
</feature>
<feature type="binding site" evidence="1">
    <location>
        <begin position="43"/>
        <end position="45"/>
    </location>
    <ligand>
        <name>NADH</name>
        <dbReference type="ChEBI" id="CHEBI:57945"/>
    </ligand>
</feature>
<feature type="binding site" evidence="1">
    <location>
        <begin position="44"/>
        <end position="45"/>
    </location>
    <ligand>
        <name>NADPH</name>
        <dbReference type="ChEBI" id="CHEBI:57783"/>
    </ligand>
</feature>
<feature type="binding site" evidence="1">
    <location>
        <begin position="69"/>
        <end position="70"/>
    </location>
    <ligand>
        <name>NADH</name>
        <dbReference type="ChEBI" id="CHEBI:57945"/>
    </ligand>
</feature>
<feature type="binding site" evidence="1">
    <location>
        <begin position="69"/>
        <end position="70"/>
    </location>
    <ligand>
        <name>NADPH</name>
        <dbReference type="ChEBI" id="CHEBI:57783"/>
    </ligand>
</feature>
<feature type="binding site" evidence="1">
    <location>
        <begin position="91"/>
        <end position="93"/>
    </location>
    <ligand>
        <name>NADH</name>
        <dbReference type="ChEBI" id="CHEBI:57945"/>
    </ligand>
</feature>
<feature type="binding site" evidence="1">
    <location>
        <begin position="91"/>
        <end position="93"/>
    </location>
    <ligand>
        <name>NADPH</name>
        <dbReference type="ChEBI" id="CHEBI:57783"/>
    </ligand>
</feature>
<feature type="binding site" evidence="1">
    <location>
        <begin position="132"/>
        <end position="133"/>
    </location>
    <ligand>
        <name>dTDP-beta-L-rhamnose</name>
        <dbReference type="ChEBI" id="CHEBI:57510"/>
    </ligand>
</feature>
<feature type="binding site" evidence="1">
    <location>
        <position position="157"/>
    </location>
    <ligand>
        <name>NADH</name>
        <dbReference type="ChEBI" id="CHEBI:57945"/>
    </ligand>
</feature>
<feature type="binding site" evidence="1">
    <location>
        <position position="157"/>
    </location>
    <ligand>
        <name>NADPH</name>
        <dbReference type="ChEBI" id="CHEBI:57783"/>
    </ligand>
</feature>
<feature type="binding site" evidence="1">
    <location>
        <position position="161"/>
    </location>
    <ligand>
        <name>NADH</name>
        <dbReference type="ChEBI" id="CHEBI:57945"/>
    </ligand>
</feature>
<feature type="binding site" evidence="1">
    <location>
        <position position="161"/>
    </location>
    <ligand>
        <name>NADPH</name>
        <dbReference type="ChEBI" id="CHEBI:57783"/>
    </ligand>
</feature>
<feature type="binding site" evidence="1">
    <location>
        <position position="182"/>
    </location>
    <ligand>
        <name>dTDP-beta-L-rhamnose</name>
        <dbReference type="ChEBI" id="CHEBI:57510"/>
    </ligand>
</feature>
<feature type="site" description="Could provide a fine-tuning to achieve optimal pKa matching between active site and substrate" evidence="1">
    <location>
        <position position="132"/>
    </location>
</feature>
<accession>A0QTF8</accession>
<accession>I7G6I9</accession>
<reference key="1">
    <citation type="submission" date="2006-10" db="EMBL/GenBank/DDBJ databases">
        <authorList>
            <person name="Fleischmann R.D."/>
            <person name="Dodson R.J."/>
            <person name="Haft D.H."/>
            <person name="Merkel J.S."/>
            <person name="Nelson W.C."/>
            <person name="Fraser C.M."/>
        </authorList>
    </citation>
    <scope>NUCLEOTIDE SEQUENCE [LARGE SCALE GENOMIC DNA]</scope>
    <source>
        <strain>ATCC 700084 / mc(2)155</strain>
    </source>
</reference>
<reference key="2">
    <citation type="journal article" date="2007" name="Genome Biol.">
        <title>Interrupted coding sequences in Mycobacterium smegmatis: authentic mutations or sequencing errors?</title>
        <authorList>
            <person name="Deshayes C."/>
            <person name="Perrodou E."/>
            <person name="Gallien S."/>
            <person name="Euphrasie D."/>
            <person name="Schaeffer C."/>
            <person name="Van-Dorsselaer A."/>
            <person name="Poch O."/>
            <person name="Lecompte O."/>
            <person name="Reyrat J.-M."/>
        </authorList>
    </citation>
    <scope>NUCLEOTIDE SEQUENCE [LARGE SCALE GENOMIC DNA]</scope>
    <source>
        <strain>ATCC 700084 / mc(2)155</strain>
    </source>
</reference>
<reference key="3">
    <citation type="journal article" date="2009" name="Genome Res.">
        <title>Ortho-proteogenomics: multiple proteomes investigation through orthology and a new MS-based protocol.</title>
        <authorList>
            <person name="Gallien S."/>
            <person name="Perrodou E."/>
            <person name="Carapito C."/>
            <person name="Deshayes C."/>
            <person name="Reyrat J.-M."/>
            <person name="Van Dorsselaer A."/>
            <person name="Poch O."/>
            <person name="Schaeffer C."/>
            <person name="Lecompte O."/>
        </authorList>
    </citation>
    <scope>NUCLEOTIDE SEQUENCE [LARGE SCALE GENOMIC DNA]</scope>
    <source>
        <strain>ATCC 700084 / mc(2)155</strain>
    </source>
</reference>
<reference key="4">
    <citation type="journal article" date="2002" name="J. Bacteriol.">
        <title>Formation of dTDP-rhamnose is essential for growth of mycobacteria.</title>
        <authorList>
            <person name="Ma Y."/>
            <person name="Pan F."/>
            <person name="McNeil M."/>
        </authorList>
    </citation>
    <scope>FUNCTION IN DTDP-RHAMNOSE BIOSYNTHESIS</scope>
    <scope>PATHWAY</scope>
</reference>
<evidence type="ECO:0000250" key="1">
    <source>
        <dbReference type="UniProtKB" id="P26392"/>
    </source>
</evidence>
<evidence type="ECO:0000256" key="2">
    <source>
        <dbReference type="SAM" id="MobiDB-lite"/>
    </source>
</evidence>
<evidence type="ECO:0000269" key="3">
    <source>
    </source>
</evidence>
<evidence type="ECO:0000303" key="4">
    <source>
    </source>
</evidence>
<evidence type="ECO:0000305" key="5"/>
<evidence type="ECO:0000305" key="6">
    <source>
    </source>
</evidence>
<comment type="function">
    <text evidence="1 3">Involved in the biosynthesis of the dTDP-L-rhamnose which is a component of the critical linker, D-N-acetylglucosamine-L-rhamnose disaccharide, which connects the galactan region of arabinogalactan to peptidoglycan via a phosphodiester linkage (PubMed:12029057). Catalyzes the reduction of dTDP-6-deoxy-L-lyxo-4-hexulose to yield dTDP-L-rhamnose (By similarity).</text>
</comment>
<comment type="catalytic activity">
    <reaction evidence="1">
        <text>dTDP-beta-L-rhamnose + NADP(+) = dTDP-4-dehydro-beta-L-rhamnose + NADPH + H(+)</text>
        <dbReference type="Rhea" id="RHEA:21796"/>
        <dbReference type="ChEBI" id="CHEBI:15378"/>
        <dbReference type="ChEBI" id="CHEBI:57510"/>
        <dbReference type="ChEBI" id="CHEBI:57783"/>
        <dbReference type="ChEBI" id="CHEBI:58349"/>
        <dbReference type="ChEBI" id="CHEBI:62830"/>
        <dbReference type="EC" id="1.1.1.133"/>
    </reaction>
</comment>
<comment type="cofactor">
    <cofactor evidence="1">
        <name>Mg(2+)</name>
        <dbReference type="ChEBI" id="CHEBI:18420"/>
    </cofactor>
    <text evidence="1">Binds 1 Mg(2+) ion per monomer.</text>
</comment>
<comment type="pathway">
    <text evidence="6">Carbohydrate biosynthesis; dTDP-L-rhamnose biosynthesis.</text>
</comment>
<comment type="similarity">
    <text evidence="5">Belongs to the dTDP-4-dehydrorhamnose reductase family.</text>
</comment>
<comment type="sequence caution" evidence="5">
    <conflict type="erroneous initiation">
        <sequence resource="EMBL-CDS" id="AFP38254"/>
    </conflict>
    <text>Truncated N-terminus.</text>
</comment>
<sequence length="327" mass="34254">MDLINGMGTSPGYWRTPREPGNDHRRARLDVMAQRIVITGAGGMVGRVLADQAAAKGHTVLALTSSQCDITDEDAVRRFVANGDVVINCAAYTQVDKAEDEPERAHAVNAVGPGNLAKACAAVDAGLIHISTDYVFGAVDRDTPYEVDDETGPVNIYGRTKLAGEQAVLAAKPDAYVVRTAWVYRGGDGSDFVATMRRLAAGDGAIDVVADQVGSPTYTGDLVGALLQIVDGGVEPGILHAANAGVASRFDQARATFEAVGADPERVRPCGSDRHPRPAPRPSYTVLSSQRSAQAGLTPLRDWREALQDAVAAVVGATTDGPLPSTP</sequence>
<organism>
    <name type="scientific">Mycolicibacterium smegmatis (strain ATCC 700084 / mc(2)155)</name>
    <name type="common">Mycobacterium smegmatis</name>
    <dbReference type="NCBI Taxonomy" id="246196"/>
    <lineage>
        <taxon>Bacteria</taxon>
        <taxon>Bacillati</taxon>
        <taxon>Actinomycetota</taxon>
        <taxon>Actinomycetes</taxon>
        <taxon>Mycobacteriales</taxon>
        <taxon>Mycobacteriaceae</taxon>
        <taxon>Mycolicibacterium</taxon>
    </lineage>
</organism>